<evidence type="ECO:0000255" key="1">
    <source>
        <dbReference type="HAMAP-Rule" id="MF_00801"/>
    </source>
</evidence>
<protein>
    <recommendedName>
        <fullName evidence="1">Endonuclease V</fullName>
        <ecNumber evidence="1">3.1.21.7</ecNumber>
    </recommendedName>
    <alternativeName>
        <fullName evidence="1">Deoxyinosine 3'endonuclease</fullName>
    </alternativeName>
    <alternativeName>
        <fullName evidence="1">Deoxyribonuclease V</fullName>
        <shortName evidence="1">DNase V</shortName>
    </alternativeName>
</protein>
<dbReference type="EC" id="3.1.21.7" evidence="1"/>
<dbReference type="EMBL" id="CP001113">
    <property type="protein sequence ID" value="ACF63448.1"/>
    <property type="molecule type" value="Genomic_DNA"/>
</dbReference>
<dbReference type="RefSeq" id="WP_000362363.1">
    <property type="nucleotide sequence ID" value="NZ_CCMR01000001.1"/>
</dbReference>
<dbReference type="SMR" id="B4T100"/>
<dbReference type="KEGG" id="see:SNSL254_A4501"/>
<dbReference type="HOGENOM" id="CLU_047631_1_0_6"/>
<dbReference type="Proteomes" id="UP000008824">
    <property type="component" value="Chromosome"/>
</dbReference>
<dbReference type="GO" id="GO:0005737">
    <property type="term" value="C:cytoplasm"/>
    <property type="evidence" value="ECO:0007669"/>
    <property type="project" value="UniProtKB-SubCell"/>
</dbReference>
<dbReference type="GO" id="GO:0043737">
    <property type="term" value="F:deoxyribonuclease V activity"/>
    <property type="evidence" value="ECO:0007669"/>
    <property type="project" value="UniProtKB-UniRule"/>
</dbReference>
<dbReference type="GO" id="GO:0000287">
    <property type="term" value="F:magnesium ion binding"/>
    <property type="evidence" value="ECO:0007669"/>
    <property type="project" value="UniProtKB-UniRule"/>
</dbReference>
<dbReference type="GO" id="GO:0016891">
    <property type="term" value="F:RNA endonuclease activity, producing 5'-phosphomonoesters"/>
    <property type="evidence" value="ECO:0007669"/>
    <property type="project" value="TreeGrafter"/>
</dbReference>
<dbReference type="GO" id="GO:0003727">
    <property type="term" value="F:single-stranded RNA binding"/>
    <property type="evidence" value="ECO:0007669"/>
    <property type="project" value="TreeGrafter"/>
</dbReference>
<dbReference type="GO" id="GO:0006281">
    <property type="term" value="P:DNA repair"/>
    <property type="evidence" value="ECO:0007669"/>
    <property type="project" value="UniProtKB-UniRule"/>
</dbReference>
<dbReference type="CDD" id="cd06559">
    <property type="entry name" value="Endonuclease_V"/>
    <property type="match status" value="1"/>
</dbReference>
<dbReference type="FunFam" id="3.30.2170.10:FF:000001">
    <property type="entry name" value="Endonuclease V"/>
    <property type="match status" value="1"/>
</dbReference>
<dbReference type="Gene3D" id="3.30.2170.10">
    <property type="entry name" value="archaeoglobus fulgidus dsm 4304 superfamily"/>
    <property type="match status" value="1"/>
</dbReference>
<dbReference type="HAMAP" id="MF_00801">
    <property type="entry name" value="Endonuclease_5"/>
    <property type="match status" value="1"/>
</dbReference>
<dbReference type="InterPro" id="IPR007581">
    <property type="entry name" value="Endonuclease-V"/>
</dbReference>
<dbReference type="NCBIfam" id="NF008629">
    <property type="entry name" value="PRK11617.1"/>
    <property type="match status" value="1"/>
</dbReference>
<dbReference type="PANTHER" id="PTHR28511">
    <property type="entry name" value="ENDONUCLEASE V"/>
    <property type="match status" value="1"/>
</dbReference>
<dbReference type="PANTHER" id="PTHR28511:SF1">
    <property type="entry name" value="ENDONUCLEASE V"/>
    <property type="match status" value="1"/>
</dbReference>
<dbReference type="Pfam" id="PF04493">
    <property type="entry name" value="Endonuclease_5"/>
    <property type="match status" value="1"/>
</dbReference>
<comment type="function">
    <text evidence="1">DNA repair enzyme involved in the repair of deaminated bases. Selectively cleaves double-stranded DNA at the second phosphodiester bond 3' to a deoxyinosine leaving behind the intact lesion on the nicked DNA.</text>
</comment>
<comment type="catalytic activity">
    <reaction evidence="1">
        <text>Endonucleolytic cleavage at apurinic or apyrimidinic sites to products with a 5'-phosphate.</text>
        <dbReference type="EC" id="3.1.21.7"/>
    </reaction>
</comment>
<comment type="cofactor">
    <cofactor evidence="1">
        <name>Mg(2+)</name>
        <dbReference type="ChEBI" id="CHEBI:18420"/>
    </cofactor>
</comment>
<comment type="subcellular location">
    <subcellularLocation>
        <location evidence="1">Cytoplasm</location>
    </subcellularLocation>
</comment>
<comment type="similarity">
    <text evidence="1">Belongs to the endonuclease V family.</text>
</comment>
<sequence>MDLASLRAQQIELASSVCREDRLDKDPPAFIGGADVGFEQGGEVTRAAMVLLKYPSLELVEYKVARIATTMPYIPGFLSFREYPALLAAWEQLSQKPDLLFVDGHGISHPRRLGVASHFGLLVDVPTIGVAKKRLCGKFEPLSTEPGALSPLMDKGEQLAWVWRSKARCNPLFIATGHRVSTDSALAWVQRCMKGYRLPEPTRWADAVASGRPAFVRWQEIQR</sequence>
<reference key="1">
    <citation type="journal article" date="2011" name="J. Bacteriol.">
        <title>Comparative genomics of 28 Salmonella enterica isolates: evidence for CRISPR-mediated adaptive sublineage evolution.</title>
        <authorList>
            <person name="Fricke W.F."/>
            <person name="Mammel M.K."/>
            <person name="McDermott P.F."/>
            <person name="Tartera C."/>
            <person name="White D.G."/>
            <person name="Leclerc J.E."/>
            <person name="Ravel J."/>
            <person name="Cebula T.A."/>
        </authorList>
    </citation>
    <scope>NUCLEOTIDE SEQUENCE [LARGE SCALE GENOMIC DNA]</scope>
    <source>
        <strain>SL254</strain>
    </source>
</reference>
<keyword id="KW-0963">Cytoplasm</keyword>
<keyword id="KW-0227">DNA damage</keyword>
<keyword id="KW-0234">DNA repair</keyword>
<keyword id="KW-0255">Endonuclease</keyword>
<keyword id="KW-0378">Hydrolase</keyword>
<keyword id="KW-0460">Magnesium</keyword>
<keyword id="KW-0479">Metal-binding</keyword>
<keyword id="KW-0540">Nuclease</keyword>
<accession>B4T100</accession>
<gene>
    <name evidence="1" type="primary">nfi</name>
    <name type="ordered locus">SNSL254_A4501</name>
</gene>
<organism>
    <name type="scientific">Salmonella newport (strain SL254)</name>
    <dbReference type="NCBI Taxonomy" id="423368"/>
    <lineage>
        <taxon>Bacteria</taxon>
        <taxon>Pseudomonadati</taxon>
        <taxon>Pseudomonadota</taxon>
        <taxon>Gammaproteobacteria</taxon>
        <taxon>Enterobacterales</taxon>
        <taxon>Enterobacteriaceae</taxon>
        <taxon>Salmonella</taxon>
    </lineage>
</organism>
<proteinExistence type="inferred from homology"/>
<name>NFI_SALNS</name>
<feature type="chain" id="PRO_1000191583" description="Endonuclease V">
    <location>
        <begin position="1"/>
        <end position="223"/>
    </location>
</feature>
<feature type="binding site" evidence="1">
    <location>
        <position position="35"/>
    </location>
    <ligand>
        <name>Mg(2+)</name>
        <dbReference type="ChEBI" id="CHEBI:18420"/>
    </ligand>
</feature>
<feature type="binding site" evidence="1">
    <location>
        <position position="103"/>
    </location>
    <ligand>
        <name>Mg(2+)</name>
        <dbReference type="ChEBI" id="CHEBI:18420"/>
    </ligand>
</feature>
<feature type="site" description="Interaction with target DNA" evidence="1">
    <location>
        <position position="73"/>
    </location>
</feature>